<name>DRIP2_ARATH</name>
<accession>Q94AY3</accession>
<accession>O04337</accession>
<sequence length="420" mass="47190">MEGDMVAKVKRETVVACMTCPLCDKLLRDATTISECLHTFCRKCIYEKITEDEIESCPVCDIDLGGTPLEKLRPDHILQDLRAKLFPLKRKKERAPEVVSSISLPAKRKERSISSLVVSTPRVSAQAGTTGKRTKAATRKDVRGSGSFTKRTVKKEEEFGDDHVESASSPETLKKFTQNKRQSSYANPNQSLSNRRNKDVDEPWDSKLHLWKPLNFLVDVANGTKDPKSELGNASHNDVQGSKTKTKDHKRKCKLEEEISNNGDPTTSETATLKRTRRTRRKRSSTFGDSRIPLLPGAASLKQERRNGHVWFSLVASSNQEGEASLPQIPANYLRIRDGNIPVSFIQKYLMRKLDLKSEDEVEITCMGEPVIPTLQLHSLVDLWLETTSKHQRVAASIGSSAKEFVMVLVYSRKLPECNN</sequence>
<keyword id="KW-0479">Metal-binding</keyword>
<keyword id="KW-1185">Reference proteome</keyword>
<keyword id="KW-0808">Transferase</keyword>
<keyword id="KW-0832">Ubl conjugation</keyword>
<keyword id="KW-0833">Ubl conjugation pathway</keyword>
<keyword id="KW-0862">Zinc</keyword>
<keyword id="KW-0863">Zinc-finger</keyword>
<protein>
    <recommendedName>
        <fullName>E3 ubiquitin protein ligase DRIP2</fullName>
        <ecNumber evidence="3">2.3.2.27</ecNumber>
    </recommendedName>
    <alternativeName>
        <fullName>DREB2A-interacting protein 2</fullName>
    </alternativeName>
    <alternativeName>
        <fullName evidence="4">RING-type E3 ubiquitin transferase DRIP2</fullName>
    </alternativeName>
</protein>
<evidence type="ECO:0000255" key="1">
    <source>
        <dbReference type="PROSITE-ProRule" id="PRU00175"/>
    </source>
</evidence>
<evidence type="ECO:0000256" key="2">
    <source>
        <dbReference type="SAM" id="MobiDB-lite"/>
    </source>
</evidence>
<evidence type="ECO:0000269" key="3">
    <source>
    </source>
</evidence>
<evidence type="ECO:0000305" key="4"/>
<reference key="1">
    <citation type="journal article" date="1999" name="Nature">
        <title>Sequence and analysis of chromosome 2 of the plant Arabidopsis thaliana.</title>
        <authorList>
            <person name="Lin X."/>
            <person name="Kaul S."/>
            <person name="Rounsley S.D."/>
            <person name="Shea T.P."/>
            <person name="Benito M.-I."/>
            <person name="Town C.D."/>
            <person name="Fujii C.Y."/>
            <person name="Mason T.M."/>
            <person name="Bowman C.L."/>
            <person name="Barnstead M.E."/>
            <person name="Feldblyum T.V."/>
            <person name="Buell C.R."/>
            <person name="Ketchum K.A."/>
            <person name="Lee J.J."/>
            <person name="Ronning C.M."/>
            <person name="Koo H.L."/>
            <person name="Moffat K.S."/>
            <person name="Cronin L.A."/>
            <person name="Shen M."/>
            <person name="Pai G."/>
            <person name="Van Aken S."/>
            <person name="Umayam L."/>
            <person name="Tallon L.J."/>
            <person name="Gill J.E."/>
            <person name="Adams M.D."/>
            <person name="Carrera A.J."/>
            <person name="Creasy T.H."/>
            <person name="Goodman H.M."/>
            <person name="Somerville C.R."/>
            <person name="Copenhaver G.P."/>
            <person name="Preuss D."/>
            <person name="Nierman W.C."/>
            <person name="White O."/>
            <person name="Eisen J.A."/>
            <person name="Salzberg S.L."/>
            <person name="Fraser C.M."/>
            <person name="Venter J.C."/>
        </authorList>
    </citation>
    <scope>NUCLEOTIDE SEQUENCE [LARGE SCALE GENOMIC DNA]</scope>
    <source>
        <strain>cv. Columbia</strain>
    </source>
</reference>
<reference key="2">
    <citation type="journal article" date="2017" name="Plant J.">
        <title>Araport11: a complete reannotation of the Arabidopsis thaliana reference genome.</title>
        <authorList>
            <person name="Cheng C.Y."/>
            <person name="Krishnakumar V."/>
            <person name="Chan A.P."/>
            <person name="Thibaud-Nissen F."/>
            <person name="Schobel S."/>
            <person name="Town C.D."/>
        </authorList>
    </citation>
    <scope>GENOME REANNOTATION</scope>
    <source>
        <strain>cv. Columbia</strain>
    </source>
</reference>
<reference key="3">
    <citation type="journal article" date="2003" name="Science">
        <title>Empirical analysis of transcriptional activity in the Arabidopsis genome.</title>
        <authorList>
            <person name="Yamada K."/>
            <person name="Lim J."/>
            <person name="Dale J.M."/>
            <person name="Chen H."/>
            <person name="Shinn P."/>
            <person name="Palm C.J."/>
            <person name="Southwick A.M."/>
            <person name="Wu H.C."/>
            <person name="Kim C.J."/>
            <person name="Nguyen M."/>
            <person name="Pham P.K."/>
            <person name="Cheuk R.F."/>
            <person name="Karlin-Newmann G."/>
            <person name="Liu S.X."/>
            <person name="Lam B."/>
            <person name="Sakano H."/>
            <person name="Wu T."/>
            <person name="Yu G."/>
            <person name="Miranda M."/>
            <person name="Quach H.L."/>
            <person name="Tripp M."/>
            <person name="Chang C.H."/>
            <person name="Lee J.M."/>
            <person name="Toriumi M.J."/>
            <person name="Chan M.M."/>
            <person name="Tang C.C."/>
            <person name="Onodera C.S."/>
            <person name="Deng J.M."/>
            <person name="Akiyama K."/>
            <person name="Ansari Y."/>
            <person name="Arakawa T."/>
            <person name="Banh J."/>
            <person name="Banno F."/>
            <person name="Bowser L."/>
            <person name="Brooks S.Y."/>
            <person name="Carninci P."/>
            <person name="Chao Q."/>
            <person name="Choy N."/>
            <person name="Enju A."/>
            <person name="Goldsmith A.D."/>
            <person name="Gurjal M."/>
            <person name="Hansen N.F."/>
            <person name="Hayashizaki Y."/>
            <person name="Johnson-Hopson C."/>
            <person name="Hsuan V.W."/>
            <person name="Iida K."/>
            <person name="Karnes M."/>
            <person name="Khan S."/>
            <person name="Koesema E."/>
            <person name="Ishida J."/>
            <person name="Jiang P.X."/>
            <person name="Jones T."/>
            <person name="Kawai J."/>
            <person name="Kamiya A."/>
            <person name="Meyers C."/>
            <person name="Nakajima M."/>
            <person name="Narusaka M."/>
            <person name="Seki M."/>
            <person name="Sakurai T."/>
            <person name="Satou M."/>
            <person name="Tamse R."/>
            <person name="Vaysberg M."/>
            <person name="Wallender E.K."/>
            <person name="Wong C."/>
            <person name="Yamamura Y."/>
            <person name="Yuan S."/>
            <person name="Shinozaki K."/>
            <person name="Davis R.W."/>
            <person name="Theologis A."/>
            <person name="Ecker J.R."/>
        </authorList>
    </citation>
    <scope>NUCLEOTIDE SEQUENCE [LARGE SCALE MRNA]</scope>
    <source>
        <strain>cv. Columbia</strain>
    </source>
</reference>
<reference key="4">
    <citation type="journal article" date="2008" name="Plant Cell">
        <title>Arabidopsis DREB2A-interacting proteins function as RING E3 ligases and negatively regulate plant drought stress-responsive gene expression.</title>
        <authorList>
            <person name="Qin F."/>
            <person name="Sakuma Y."/>
            <person name="Tran L.-S.H."/>
            <person name="Maruyama K."/>
            <person name="Kidokoro S."/>
            <person name="Fujita Y."/>
            <person name="Fujita M."/>
            <person name="Umezawa T."/>
            <person name="Sawano Y."/>
            <person name="Miyazono K."/>
            <person name="Tanokura M."/>
            <person name="Shinozaki K."/>
            <person name="Yamaguchi-Shinozaki K."/>
        </authorList>
    </citation>
    <scope>FUNCTION</scope>
    <scope>CATALYTIC ACTIVITY</scope>
    <scope>INTERACTION WITH DREB2A</scope>
    <scope>TISSUE SPECIFICITY</scope>
    <scope>AUTOUBIQUITINATION</scope>
    <scope>DISRUPTION PHENOTYPE</scope>
</reference>
<organism>
    <name type="scientific">Arabidopsis thaliana</name>
    <name type="common">Mouse-ear cress</name>
    <dbReference type="NCBI Taxonomy" id="3702"/>
    <lineage>
        <taxon>Eukaryota</taxon>
        <taxon>Viridiplantae</taxon>
        <taxon>Streptophyta</taxon>
        <taxon>Embryophyta</taxon>
        <taxon>Tracheophyta</taxon>
        <taxon>Spermatophyta</taxon>
        <taxon>Magnoliopsida</taxon>
        <taxon>eudicotyledons</taxon>
        <taxon>Gunneridae</taxon>
        <taxon>Pentapetalae</taxon>
        <taxon>rosids</taxon>
        <taxon>malvids</taxon>
        <taxon>Brassicales</taxon>
        <taxon>Brassicaceae</taxon>
        <taxon>Camelineae</taxon>
        <taxon>Arabidopsis</taxon>
    </lineage>
</organism>
<dbReference type="EC" id="2.3.2.27" evidence="3"/>
<dbReference type="EMBL" id="U93215">
    <property type="protein sequence ID" value="AAB63079.2"/>
    <property type="molecule type" value="Genomic_DNA"/>
</dbReference>
<dbReference type="EMBL" id="CP002685">
    <property type="protein sequence ID" value="AEC08411.1"/>
    <property type="molecule type" value="Genomic_DNA"/>
</dbReference>
<dbReference type="EMBL" id="CP002685">
    <property type="protein sequence ID" value="ANM61597.1"/>
    <property type="molecule type" value="Genomic_DNA"/>
</dbReference>
<dbReference type="EMBL" id="AY045618">
    <property type="protein sequence ID" value="AAK73976.1"/>
    <property type="molecule type" value="mRNA"/>
</dbReference>
<dbReference type="EMBL" id="BT000505">
    <property type="protein sequence ID" value="AAN18074.1"/>
    <property type="molecule type" value="mRNA"/>
</dbReference>
<dbReference type="PIR" id="B84710">
    <property type="entry name" value="B84710"/>
</dbReference>
<dbReference type="RefSeq" id="NP_001323803.1">
    <property type="nucleotide sequence ID" value="NM_001336273.1"/>
</dbReference>
<dbReference type="RefSeq" id="NP_565702.1">
    <property type="nucleotide sequence ID" value="NM_128610.3"/>
</dbReference>
<dbReference type="SMR" id="Q94AY3"/>
<dbReference type="BioGRID" id="2957">
    <property type="interactions" value="16"/>
</dbReference>
<dbReference type="FunCoup" id="Q94AY3">
    <property type="interactions" value="292"/>
</dbReference>
<dbReference type="IntAct" id="Q94AY3">
    <property type="interactions" value="22"/>
</dbReference>
<dbReference type="STRING" id="3702.Q94AY3"/>
<dbReference type="PaxDb" id="3702-AT2G30580.1"/>
<dbReference type="ProteomicsDB" id="224305"/>
<dbReference type="EnsemblPlants" id="AT2G30580.1">
    <property type="protein sequence ID" value="AT2G30580.1"/>
    <property type="gene ID" value="AT2G30580"/>
</dbReference>
<dbReference type="EnsemblPlants" id="AT2G30580.2">
    <property type="protein sequence ID" value="AT2G30580.2"/>
    <property type="gene ID" value="AT2G30580"/>
</dbReference>
<dbReference type="GeneID" id="817608"/>
<dbReference type="Gramene" id="AT2G30580.1">
    <property type="protein sequence ID" value="AT2G30580.1"/>
    <property type="gene ID" value="AT2G30580"/>
</dbReference>
<dbReference type="Gramene" id="AT2G30580.2">
    <property type="protein sequence ID" value="AT2G30580.2"/>
    <property type="gene ID" value="AT2G30580"/>
</dbReference>
<dbReference type="KEGG" id="ath:AT2G30580"/>
<dbReference type="Araport" id="AT2G30580"/>
<dbReference type="TAIR" id="AT2G30580">
    <property type="gene designation" value="DRIP2"/>
</dbReference>
<dbReference type="eggNOG" id="KOG2660">
    <property type="taxonomic scope" value="Eukaryota"/>
</dbReference>
<dbReference type="HOGENOM" id="CLU_039235_1_0_1"/>
<dbReference type="InParanoid" id="Q94AY3"/>
<dbReference type="OMA" id="SKHQRVA"/>
<dbReference type="OrthoDB" id="1305878at2759"/>
<dbReference type="PhylomeDB" id="Q94AY3"/>
<dbReference type="UniPathway" id="UPA00143"/>
<dbReference type="PRO" id="PR:Q94AY3"/>
<dbReference type="Proteomes" id="UP000006548">
    <property type="component" value="Chromosome 2"/>
</dbReference>
<dbReference type="ExpressionAtlas" id="Q94AY3">
    <property type="expression patterns" value="baseline and differential"/>
</dbReference>
<dbReference type="GO" id="GO:0004842">
    <property type="term" value="F:ubiquitin-protein transferase activity"/>
    <property type="evidence" value="ECO:0000314"/>
    <property type="project" value="TAIR"/>
</dbReference>
<dbReference type="GO" id="GO:0008270">
    <property type="term" value="F:zinc ion binding"/>
    <property type="evidence" value="ECO:0007669"/>
    <property type="project" value="UniProtKB-KW"/>
</dbReference>
<dbReference type="GO" id="GO:0051865">
    <property type="term" value="P:protein autoubiquitination"/>
    <property type="evidence" value="ECO:0000314"/>
    <property type="project" value="UniProtKB"/>
</dbReference>
<dbReference type="GO" id="GO:0016567">
    <property type="term" value="P:protein ubiquitination"/>
    <property type="evidence" value="ECO:0000314"/>
    <property type="project" value="UniProtKB"/>
</dbReference>
<dbReference type="GO" id="GO:0009414">
    <property type="term" value="P:response to water deprivation"/>
    <property type="evidence" value="ECO:0000316"/>
    <property type="project" value="TAIR"/>
</dbReference>
<dbReference type="CDD" id="cd17087">
    <property type="entry name" value="RAWUL_DRIP_like"/>
    <property type="match status" value="1"/>
</dbReference>
<dbReference type="CDD" id="cd16525">
    <property type="entry name" value="RING-HC_PCGF"/>
    <property type="match status" value="1"/>
</dbReference>
<dbReference type="FunFam" id="3.30.40.10:FF:000033">
    <property type="entry name" value="Polycomb group RING finger protein 3"/>
    <property type="match status" value="1"/>
</dbReference>
<dbReference type="Gene3D" id="3.10.20.90">
    <property type="entry name" value="Phosphatidylinositol 3-kinase Catalytic Subunit, Chain A, domain 1"/>
    <property type="match status" value="1"/>
</dbReference>
<dbReference type="Gene3D" id="3.30.40.10">
    <property type="entry name" value="Zinc/RING finger domain, C3HC4 (zinc finger)"/>
    <property type="match status" value="1"/>
</dbReference>
<dbReference type="InterPro" id="IPR044768">
    <property type="entry name" value="DRIP-like_RAWUL"/>
</dbReference>
<dbReference type="InterPro" id="IPR044807">
    <property type="entry name" value="DRIP1-like"/>
</dbReference>
<dbReference type="InterPro" id="IPR001841">
    <property type="entry name" value="Znf_RING"/>
</dbReference>
<dbReference type="InterPro" id="IPR013083">
    <property type="entry name" value="Znf_RING/FYVE/PHD"/>
</dbReference>
<dbReference type="InterPro" id="IPR017907">
    <property type="entry name" value="Znf_RING_CS"/>
</dbReference>
<dbReference type="PANTHER" id="PTHR46293">
    <property type="entry name" value="E3 UBIQUITIN PROTEIN LIGASE DRIP1"/>
    <property type="match status" value="1"/>
</dbReference>
<dbReference type="PANTHER" id="PTHR46293:SF8">
    <property type="entry name" value="E3 UBIQUITIN PROTEIN LIGASE DRIP2"/>
    <property type="match status" value="1"/>
</dbReference>
<dbReference type="Pfam" id="PF13923">
    <property type="entry name" value="zf-C3HC4_2"/>
    <property type="match status" value="1"/>
</dbReference>
<dbReference type="SMART" id="SM00184">
    <property type="entry name" value="RING"/>
    <property type="match status" value="1"/>
</dbReference>
<dbReference type="SUPFAM" id="SSF57850">
    <property type="entry name" value="RING/U-box"/>
    <property type="match status" value="1"/>
</dbReference>
<dbReference type="PROSITE" id="PS00518">
    <property type="entry name" value="ZF_RING_1"/>
    <property type="match status" value="1"/>
</dbReference>
<dbReference type="PROSITE" id="PS50089">
    <property type="entry name" value="ZF_RING_2"/>
    <property type="match status" value="1"/>
</dbReference>
<proteinExistence type="evidence at protein level"/>
<gene>
    <name type="primary">DRIP2</name>
    <name type="ordered locus">At2g30580</name>
    <name type="ORF">T6B20.7</name>
</gene>
<feature type="chain" id="PRO_0000397043" description="E3 ubiquitin protein ligase DRIP2">
    <location>
        <begin position="1"/>
        <end position="420"/>
    </location>
</feature>
<feature type="zinc finger region" description="RING-type" evidence="1">
    <location>
        <begin position="20"/>
        <end position="61"/>
    </location>
</feature>
<feature type="region of interest" description="Disordered" evidence="2">
    <location>
        <begin position="113"/>
        <end position="201"/>
    </location>
</feature>
<feature type="region of interest" description="Disordered" evidence="2">
    <location>
        <begin position="226"/>
        <end position="289"/>
    </location>
</feature>
<feature type="compositionally biased region" description="Polar residues" evidence="2">
    <location>
        <begin position="113"/>
        <end position="123"/>
    </location>
</feature>
<feature type="compositionally biased region" description="Basic and acidic residues" evidence="2">
    <location>
        <begin position="154"/>
        <end position="165"/>
    </location>
</feature>
<feature type="compositionally biased region" description="Polar residues" evidence="2">
    <location>
        <begin position="166"/>
        <end position="194"/>
    </location>
</feature>
<feature type="compositionally biased region" description="Polar residues" evidence="2">
    <location>
        <begin position="232"/>
        <end position="242"/>
    </location>
</feature>
<feature type="compositionally biased region" description="Basic residues" evidence="2">
    <location>
        <begin position="244"/>
        <end position="253"/>
    </location>
</feature>
<feature type="compositionally biased region" description="Polar residues" evidence="2">
    <location>
        <begin position="260"/>
        <end position="273"/>
    </location>
</feature>
<feature type="compositionally biased region" description="Basic residues" evidence="2">
    <location>
        <begin position="274"/>
        <end position="284"/>
    </location>
</feature>
<comment type="function">
    <text evidence="3">E3 ubiquitin-protein ligase that acts as a negative regulator of the response to water stress. Mediates ubiquitination and subsequent proteasomal degradation of the drought-induced transcriptional activator DREB2A. Functionally redundant with DRIP1.</text>
</comment>
<comment type="catalytic activity">
    <reaction evidence="3">
        <text>S-ubiquitinyl-[E2 ubiquitin-conjugating enzyme]-L-cysteine + [acceptor protein]-L-lysine = [E2 ubiquitin-conjugating enzyme]-L-cysteine + N(6)-ubiquitinyl-[acceptor protein]-L-lysine.</text>
        <dbReference type="EC" id="2.3.2.27"/>
    </reaction>
</comment>
<comment type="pathway">
    <text>Protein modification; protein ubiquitination.</text>
</comment>
<comment type="subunit">
    <text evidence="3">Interacts with DREB2A.</text>
</comment>
<comment type="interaction">
    <interactant intactId="EBI-1787347">
        <id>Q94AY3</id>
    </interactant>
    <interactant intactId="EBI-2367923">
        <id>Q38829</id>
        <label>IAA11</label>
    </interactant>
    <organismsDiffer>false</organismsDiffer>
    <experiments>3</experiments>
</comment>
<comment type="interaction">
    <interactant intactId="EBI-1787347">
        <id>Q94AY3</id>
    </interactant>
    <interactant intactId="EBI-15193683">
        <id>Q5CCK4</id>
        <label>VAL2</label>
    </interactant>
    <organismsDiffer>false</organismsDiffer>
    <experiments>3</experiments>
</comment>
<comment type="tissue specificity">
    <text evidence="3">Expressed in roots, leaves and flowers.</text>
</comment>
<comment type="PTM">
    <text evidence="3">Auto-ubiquitinated.</text>
</comment>
<comment type="disruption phenotype">
    <text evidence="3">No visible phenotype. Drip1 and drip2 double mutant shows delayed growth and development, but increased tolerance to drought stress, compared to wild-type.</text>
</comment>